<proteinExistence type="inferred from homology"/>
<protein>
    <recommendedName>
        <fullName evidence="1">Siroheme synthase</fullName>
    </recommendedName>
    <domain>
        <recommendedName>
            <fullName evidence="1">Uroporphyrinogen-III C-methyltransferase</fullName>
            <shortName evidence="1">Urogen III methylase</shortName>
            <ecNumber evidence="1">2.1.1.107</ecNumber>
        </recommendedName>
        <alternativeName>
            <fullName evidence="1">SUMT</fullName>
        </alternativeName>
        <alternativeName>
            <fullName evidence="1">Uroporphyrinogen III methylase</fullName>
            <shortName evidence="1">UROM</shortName>
        </alternativeName>
    </domain>
    <domain>
        <recommendedName>
            <fullName evidence="1">Precorrin-2 dehydrogenase</fullName>
            <ecNumber evidence="1">1.3.1.76</ecNumber>
        </recommendedName>
    </domain>
    <domain>
        <recommendedName>
            <fullName evidence="1">Sirohydrochlorin ferrochelatase</fullName>
            <ecNumber evidence="1">4.99.1.4</ecNumber>
        </recommendedName>
    </domain>
</protein>
<feature type="chain" id="PRO_0000330564" description="Siroheme synthase">
    <location>
        <begin position="1"/>
        <end position="471"/>
    </location>
</feature>
<feature type="region of interest" description="Precorrin-2 dehydrogenase /sirohydrochlorin ferrochelatase" evidence="1">
    <location>
        <begin position="1"/>
        <end position="203"/>
    </location>
</feature>
<feature type="region of interest" description="Uroporphyrinogen-III C-methyltransferase" evidence="1">
    <location>
        <begin position="215"/>
        <end position="471"/>
    </location>
</feature>
<feature type="active site" description="Proton acceptor" evidence="1">
    <location>
        <position position="247"/>
    </location>
</feature>
<feature type="active site" description="Proton donor" evidence="1">
    <location>
        <position position="269"/>
    </location>
</feature>
<feature type="binding site" evidence="1">
    <location>
        <begin position="22"/>
        <end position="23"/>
    </location>
    <ligand>
        <name>NAD(+)</name>
        <dbReference type="ChEBI" id="CHEBI:57540"/>
    </ligand>
</feature>
<feature type="binding site" evidence="1">
    <location>
        <begin position="43"/>
        <end position="44"/>
    </location>
    <ligand>
        <name>NAD(+)</name>
        <dbReference type="ChEBI" id="CHEBI:57540"/>
    </ligand>
</feature>
<feature type="binding site" evidence="1">
    <location>
        <position position="224"/>
    </location>
    <ligand>
        <name>S-adenosyl-L-methionine</name>
        <dbReference type="ChEBI" id="CHEBI:59789"/>
    </ligand>
</feature>
<feature type="binding site" evidence="1">
    <location>
        <begin position="300"/>
        <end position="302"/>
    </location>
    <ligand>
        <name>S-adenosyl-L-methionine</name>
        <dbReference type="ChEBI" id="CHEBI:59789"/>
    </ligand>
</feature>
<feature type="binding site" evidence="1">
    <location>
        <position position="305"/>
    </location>
    <ligand>
        <name>S-adenosyl-L-methionine</name>
        <dbReference type="ChEBI" id="CHEBI:59789"/>
    </ligand>
</feature>
<feature type="binding site" evidence="1">
    <location>
        <begin position="330"/>
        <end position="331"/>
    </location>
    <ligand>
        <name>S-adenosyl-L-methionine</name>
        <dbReference type="ChEBI" id="CHEBI:59789"/>
    </ligand>
</feature>
<feature type="binding site" evidence="1">
    <location>
        <position position="382"/>
    </location>
    <ligand>
        <name>S-adenosyl-L-methionine</name>
        <dbReference type="ChEBI" id="CHEBI:59789"/>
    </ligand>
</feature>
<feature type="binding site" evidence="1">
    <location>
        <position position="411"/>
    </location>
    <ligand>
        <name>S-adenosyl-L-methionine</name>
        <dbReference type="ChEBI" id="CHEBI:59789"/>
    </ligand>
</feature>
<feature type="modified residue" description="Phosphoserine" evidence="1">
    <location>
        <position position="128"/>
    </location>
</feature>
<reference key="1">
    <citation type="journal article" date="2006" name="Genome Res.">
        <title>Massive genome erosion and functional adaptations provide insights into the symbiotic lifestyle of Sodalis glossinidius in the tsetse host.</title>
        <authorList>
            <person name="Toh H."/>
            <person name="Weiss B.L."/>
            <person name="Perkin S.A.H."/>
            <person name="Yamashita A."/>
            <person name="Oshima K."/>
            <person name="Hattori M."/>
            <person name="Aksoy S."/>
        </authorList>
    </citation>
    <scope>NUCLEOTIDE SEQUENCE [LARGE SCALE GENOMIC DNA]</scope>
    <source>
        <strain>morsitans</strain>
    </source>
</reference>
<accession>Q2NVN0</accession>
<organism>
    <name type="scientific">Sodalis glossinidius (strain morsitans)</name>
    <dbReference type="NCBI Taxonomy" id="343509"/>
    <lineage>
        <taxon>Bacteria</taxon>
        <taxon>Pseudomonadati</taxon>
        <taxon>Pseudomonadota</taxon>
        <taxon>Gammaproteobacteria</taxon>
        <taxon>Enterobacterales</taxon>
        <taxon>Bruguierivoracaceae</taxon>
        <taxon>Sodalis</taxon>
    </lineage>
</organism>
<evidence type="ECO:0000255" key="1">
    <source>
        <dbReference type="HAMAP-Rule" id="MF_01646"/>
    </source>
</evidence>
<gene>
    <name evidence="1" type="primary">cysG</name>
    <name type="ordered locus">SG0520</name>
</gene>
<name>CYSG_SODGM</name>
<keyword id="KW-0169">Cobalamin biosynthesis</keyword>
<keyword id="KW-0456">Lyase</keyword>
<keyword id="KW-0489">Methyltransferase</keyword>
<keyword id="KW-0511">Multifunctional enzyme</keyword>
<keyword id="KW-0520">NAD</keyword>
<keyword id="KW-0560">Oxidoreductase</keyword>
<keyword id="KW-0597">Phosphoprotein</keyword>
<keyword id="KW-0627">Porphyrin biosynthesis</keyword>
<keyword id="KW-0949">S-adenosyl-L-methionine</keyword>
<keyword id="KW-0808">Transferase</keyword>
<dbReference type="EC" id="2.1.1.107" evidence="1"/>
<dbReference type="EC" id="1.3.1.76" evidence="1"/>
<dbReference type="EC" id="4.99.1.4" evidence="1"/>
<dbReference type="EMBL" id="AP008232">
    <property type="protein sequence ID" value="BAE73795.1"/>
    <property type="molecule type" value="Genomic_DNA"/>
</dbReference>
<dbReference type="RefSeq" id="WP_011410493.1">
    <property type="nucleotide sequence ID" value="NC_007712.1"/>
</dbReference>
<dbReference type="SMR" id="Q2NVN0"/>
<dbReference type="STRING" id="343509.SG0520"/>
<dbReference type="KEGG" id="sgl:SG0520"/>
<dbReference type="eggNOG" id="COG0007">
    <property type="taxonomic scope" value="Bacteria"/>
</dbReference>
<dbReference type="eggNOG" id="COG1648">
    <property type="taxonomic scope" value="Bacteria"/>
</dbReference>
<dbReference type="HOGENOM" id="CLU_011276_2_0_6"/>
<dbReference type="OrthoDB" id="9815856at2"/>
<dbReference type="BioCyc" id="SGLO343509:SGP1_RS04620-MONOMER"/>
<dbReference type="UniPathway" id="UPA00148">
    <property type="reaction ID" value="UER00211"/>
</dbReference>
<dbReference type="UniPathway" id="UPA00148">
    <property type="reaction ID" value="UER00222"/>
</dbReference>
<dbReference type="UniPathway" id="UPA00262">
    <property type="reaction ID" value="UER00211"/>
</dbReference>
<dbReference type="UniPathway" id="UPA00262">
    <property type="reaction ID" value="UER00222"/>
</dbReference>
<dbReference type="UniPathway" id="UPA00262">
    <property type="reaction ID" value="UER00376"/>
</dbReference>
<dbReference type="Proteomes" id="UP000001932">
    <property type="component" value="Chromosome"/>
</dbReference>
<dbReference type="GO" id="GO:0051287">
    <property type="term" value="F:NAD binding"/>
    <property type="evidence" value="ECO:0007669"/>
    <property type="project" value="InterPro"/>
</dbReference>
<dbReference type="GO" id="GO:0043115">
    <property type="term" value="F:precorrin-2 dehydrogenase activity"/>
    <property type="evidence" value="ECO:0007669"/>
    <property type="project" value="UniProtKB-UniRule"/>
</dbReference>
<dbReference type="GO" id="GO:0051266">
    <property type="term" value="F:sirohydrochlorin ferrochelatase activity"/>
    <property type="evidence" value="ECO:0007669"/>
    <property type="project" value="UniProtKB-EC"/>
</dbReference>
<dbReference type="GO" id="GO:0004851">
    <property type="term" value="F:uroporphyrin-III C-methyltransferase activity"/>
    <property type="evidence" value="ECO:0007669"/>
    <property type="project" value="UniProtKB-UniRule"/>
</dbReference>
<dbReference type="GO" id="GO:0009236">
    <property type="term" value="P:cobalamin biosynthetic process"/>
    <property type="evidence" value="ECO:0007669"/>
    <property type="project" value="UniProtKB-UniRule"/>
</dbReference>
<dbReference type="GO" id="GO:0032259">
    <property type="term" value="P:methylation"/>
    <property type="evidence" value="ECO:0007669"/>
    <property type="project" value="UniProtKB-KW"/>
</dbReference>
<dbReference type="GO" id="GO:0019354">
    <property type="term" value="P:siroheme biosynthetic process"/>
    <property type="evidence" value="ECO:0007669"/>
    <property type="project" value="UniProtKB-UniRule"/>
</dbReference>
<dbReference type="CDD" id="cd11642">
    <property type="entry name" value="SUMT"/>
    <property type="match status" value="1"/>
</dbReference>
<dbReference type="FunFam" id="3.30.160.110:FF:000001">
    <property type="entry name" value="Siroheme synthase"/>
    <property type="match status" value="1"/>
</dbReference>
<dbReference type="FunFam" id="3.30.950.10:FF:000001">
    <property type="entry name" value="Siroheme synthase"/>
    <property type="match status" value="1"/>
</dbReference>
<dbReference type="FunFam" id="3.40.1010.10:FF:000001">
    <property type="entry name" value="Siroheme synthase"/>
    <property type="match status" value="1"/>
</dbReference>
<dbReference type="Gene3D" id="3.40.1010.10">
    <property type="entry name" value="Cobalt-precorrin-4 Transmethylase, Domain 1"/>
    <property type="match status" value="1"/>
</dbReference>
<dbReference type="Gene3D" id="3.30.950.10">
    <property type="entry name" value="Methyltransferase, Cobalt-precorrin-4 Transmethylase, Domain 2"/>
    <property type="match status" value="1"/>
</dbReference>
<dbReference type="Gene3D" id="3.40.50.720">
    <property type="entry name" value="NAD(P)-binding Rossmann-like Domain"/>
    <property type="match status" value="1"/>
</dbReference>
<dbReference type="Gene3D" id="1.10.8.210">
    <property type="entry name" value="Sirohaem synthase, dimerisation domain"/>
    <property type="match status" value="1"/>
</dbReference>
<dbReference type="Gene3D" id="3.30.160.110">
    <property type="entry name" value="Siroheme synthase, domain 2"/>
    <property type="match status" value="1"/>
</dbReference>
<dbReference type="HAMAP" id="MF_01646">
    <property type="entry name" value="Siroheme_synth"/>
    <property type="match status" value="1"/>
</dbReference>
<dbReference type="InterPro" id="IPR000878">
    <property type="entry name" value="4pyrrol_Mease"/>
</dbReference>
<dbReference type="InterPro" id="IPR035996">
    <property type="entry name" value="4pyrrol_Methylase_sf"/>
</dbReference>
<dbReference type="InterPro" id="IPR014777">
    <property type="entry name" value="4pyrrole_Mease_sub1"/>
</dbReference>
<dbReference type="InterPro" id="IPR014776">
    <property type="entry name" value="4pyrrole_Mease_sub2"/>
</dbReference>
<dbReference type="InterPro" id="IPR006366">
    <property type="entry name" value="CobA/CysG_C"/>
</dbReference>
<dbReference type="InterPro" id="IPR036291">
    <property type="entry name" value="NAD(P)-bd_dom_sf"/>
</dbReference>
<dbReference type="InterPro" id="IPR050161">
    <property type="entry name" value="Siro_Cobalamin_biosynth"/>
</dbReference>
<dbReference type="InterPro" id="IPR037115">
    <property type="entry name" value="Sirohaem_synt_dimer_dom_sf"/>
</dbReference>
<dbReference type="InterPro" id="IPR012409">
    <property type="entry name" value="Sirohaem_synth"/>
</dbReference>
<dbReference type="InterPro" id="IPR028281">
    <property type="entry name" value="Sirohaem_synthase_central"/>
</dbReference>
<dbReference type="InterPro" id="IPR019478">
    <property type="entry name" value="Sirohaem_synthase_dimer_dom"/>
</dbReference>
<dbReference type="InterPro" id="IPR006367">
    <property type="entry name" value="Sirohaem_synthase_N"/>
</dbReference>
<dbReference type="InterPro" id="IPR003043">
    <property type="entry name" value="Uropor_MeTrfase_CS"/>
</dbReference>
<dbReference type="NCBIfam" id="TIGR01469">
    <property type="entry name" value="cobA_cysG_Cterm"/>
    <property type="match status" value="1"/>
</dbReference>
<dbReference type="NCBIfam" id="TIGR01470">
    <property type="entry name" value="cysG_Nterm"/>
    <property type="match status" value="1"/>
</dbReference>
<dbReference type="NCBIfam" id="NF004790">
    <property type="entry name" value="PRK06136.1"/>
    <property type="match status" value="1"/>
</dbReference>
<dbReference type="NCBIfam" id="NF007922">
    <property type="entry name" value="PRK10637.1"/>
    <property type="match status" value="1"/>
</dbReference>
<dbReference type="PANTHER" id="PTHR45790:SF1">
    <property type="entry name" value="SIROHEME SYNTHASE"/>
    <property type="match status" value="1"/>
</dbReference>
<dbReference type="PANTHER" id="PTHR45790">
    <property type="entry name" value="SIROHEME SYNTHASE-RELATED"/>
    <property type="match status" value="1"/>
</dbReference>
<dbReference type="Pfam" id="PF10414">
    <property type="entry name" value="CysG_dimeriser"/>
    <property type="match status" value="1"/>
</dbReference>
<dbReference type="Pfam" id="PF13241">
    <property type="entry name" value="NAD_binding_7"/>
    <property type="match status" value="1"/>
</dbReference>
<dbReference type="Pfam" id="PF14824">
    <property type="entry name" value="Sirohm_synth_M"/>
    <property type="match status" value="1"/>
</dbReference>
<dbReference type="Pfam" id="PF00590">
    <property type="entry name" value="TP_methylase"/>
    <property type="match status" value="1"/>
</dbReference>
<dbReference type="PIRSF" id="PIRSF036426">
    <property type="entry name" value="Sirohaem_synth"/>
    <property type="match status" value="1"/>
</dbReference>
<dbReference type="SUPFAM" id="SSF51735">
    <property type="entry name" value="NAD(P)-binding Rossmann-fold domains"/>
    <property type="match status" value="1"/>
</dbReference>
<dbReference type="SUPFAM" id="SSF75615">
    <property type="entry name" value="Siroheme synthase middle domains-like"/>
    <property type="match status" value="1"/>
</dbReference>
<dbReference type="SUPFAM" id="SSF53790">
    <property type="entry name" value="Tetrapyrrole methylase"/>
    <property type="match status" value="1"/>
</dbReference>
<dbReference type="PROSITE" id="PS00839">
    <property type="entry name" value="SUMT_1"/>
    <property type="match status" value="1"/>
</dbReference>
<comment type="function">
    <text evidence="1">Multifunctional enzyme that catalyzes the SAM-dependent methylations of uroporphyrinogen III at position C-2 and C-7 to form precorrin-2 via precorrin-1. Then it catalyzes the NAD-dependent ring dehydrogenation of precorrin-2 to yield sirohydrochlorin. Finally, it catalyzes the ferrochelation of sirohydrochlorin to yield siroheme.</text>
</comment>
<comment type="catalytic activity">
    <reaction evidence="1">
        <text>uroporphyrinogen III + 2 S-adenosyl-L-methionine = precorrin-2 + 2 S-adenosyl-L-homocysteine + H(+)</text>
        <dbReference type="Rhea" id="RHEA:32459"/>
        <dbReference type="ChEBI" id="CHEBI:15378"/>
        <dbReference type="ChEBI" id="CHEBI:57308"/>
        <dbReference type="ChEBI" id="CHEBI:57856"/>
        <dbReference type="ChEBI" id="CHEBI:58827"/>
        <dbReference type="ChEBI" id="CHEBI:59789"/>
        <dbReference type="EC" id="2.1.1.107"/>
    </reaction>
</comment>
<comment type="catalytic activity">
    <reaction evidence="1">
        <text>precorrin-2 + NAD(+) = sirohydrochlorin + NADH + 2 H(+)</text>
        <dbReference type="Rhea" id="RHEA:15613"/>
        <dbReference type="ChEBI" id="CHEBI:15378"/>
        <dbReference type="ChEBI" id="CHEBI:57540"/>
        <dbReference type="ChEBI" id="CHEBI:57945"/>
        <dbReference type="ChEBI" id="CHEBI:58351"/>
        <dbReference type="ChEBI" id="CHEBI:58827"/>
        <dbReference type="EC" id="1.3.1.76"/>
    </reaction>
</comment>
<comment type="catalytic activity">
    <reaction evidence="1">
        <text>siroheme + 2 H(+) = sirohydrochlorin + Fe(2+)</text>
        <dbReference type="Rhea" id="RHEA:24360"/>
        <dbReference type="ChEBI" id="CHEBI:15378"/>
        <dbReference type="ChEBI" id="CHEBI:29033"/>
        <dbReference type="ChEBI" id="CHEBI:58351"/>
        <dbReference type="ChEBI" id="CHEBI:60052"/>
        <dbReference type="EC" id="4.99.1.4"/>
    </reaction>
</comment>
<comment type="pathway">
    <text evidence="1">Cofactor biosynthesis; adenosylcobalamin biosynthesis; precorrin-2 from uroporphyrinogen III: step 1/1.</text>
</comment>
<comment type="pathway">
    <text evidence="1">Cofactor biosynthesis; adenosylcobalamin biosynthesis; sirohydrochlorin from precorrin-2: step 1/1.</text>
</comment>
<comment type="pathway">
    <text evidence="1">Porphyrin-containing compound metabolism; siroheme biosynthesis; precorrin-2 from uroporphyrinogen III: step 1/1.</text>
</comment>
<comment type="pathway">
    <text evidence="1">Porphyrin-containing compound metabolism; siroheme biosynthesis; siroheme from sirohydrochlorin: step 1/1.</text>
</comment>
<comment type="pathway">
    <text evidence="1">Porphyrin-containing compound metabolism; siroheme biosynthesis; sirohydrochlorin from precorrin-2: step 1/1.</text>
</comment>
<comment type="similarity">
    <text evidence="1">In the N-terminal section; belongs to the precorrin-2 dehydrogenase / sirohydrochlorin ferrochelatase family.</text>
</comment>
<comment type="similarity">
    <text evidence="1">In the C-terminal section; belongs to the precorrin methyltransferase family.</text>
</comment>
<sequence>MEYLPLFADLRRRPVLVVGGGEVAARKIQLLMRAGAQIIVAARALCPALEEIRQAGGLSWLGESFEPAMLDDVFLVIAATDDAALNARVSQCAEQRHLLANVVDDQPYCSFIFPSIIDRAPIVVAISSSGTAPVLARILREKLESILPTFLGPMAAIAGAWRGRVKQRIRSMAGRRRFWEKALNGRFASLMAQGRLEQAEQALEQALNAGPEHGGEVALVGAGPGDSGLLTLRGLQLMQQADVVLYDYLVSPEVLELVRRDAERICAGKRVGEHSMPQQEINRLLVTLAQQGKKVVRLKGGDPFIFGRGGEELQAVATAGIPFQVVSGITAAAGATAYAGIPLTHREHAQSITFITGHLRDGADALDWQALARGRQTLAIYMGVVKAAEISSQLIRHGRSAQTPVAVISRGTCSDQYVQTGTLEALDQLAQKAPTPALVVIGEVVALHHEINWFGQQNLAAQKRASVVNLA</sequence>